<feature type="chain" id="PRO_0000298109" description="Cell division topological specificity factor">
    <location>
        <begin position="1"/>
        <end position="84"/>
    </location>
</feature>
<organism>
    <name type="scientific">Desulfotalea psychrophila (strain LSv54 / DSM 12343)</name>
    <dbReference type="NCBI Taxonomy" id="177439"/>
    <lineage>
        <taxon>Bacteria</taxon>
        <taxon>Pseudomonadati</taxon>
        <taxon>Thermodesulfobacteriota</taxon>
        <taxon>Desulfobulbia</taxon>
        <taxon>Desulfobulbales</taxon>
        <taxon>Desulfocapsaceae</taxon>
        <taxon>Desulfotalea</taxon>
    </lineage>
</organism>
<proteinExistence type="inferred from homology"/>
<comment type="function">
    <text evidence="1">Prevents the cell division inhibition by proteins MinC and MinD at internal division sites while permitting inhibition at polar sites. This ensures cell division at the proper site by restricting the formation of a division septum at the midpoint of the long axis of the cell.</text>
</comment>
<comment type="similarity">
    <text evidence="1">Belongs to the MinE family.</text>
</comment>
<keyword id="KW-0131">Cell cycle</keyword>
<keyword id="KW-0132">Cell division</keyword>
<keyword id="KW-1185">Reference proteome</keyword>
<protein>
    <recommendedName>
        <fullName evidence="1">Cell division topological specificity factor</fullName>
    </recommendedName>
</protein>
<name>MINE_DESPS</name>
<sequence length="84" mass="9532">MSLFSFFKNEEKPSSAARAKERLQVVIAHERGAVERPDYLPQLQRDLLEVIKKYVDISEDKLDIKVDCIGGLSTLEVNVELPDS</sequence>
<reference key="1">
    <citation type="journal article" date="2004" name="Environ. Microbiol.">
        <title>The genome of Desulfotalea psychrophila, a sulfate-reducing bacterium from permanently cold Arctic sediments.</title>
        <authorList>
            <person name="Rabus R."/>
            <person name="Ruepp A."/>
            <person name="Frickey T."/>
            <person name="Rattei T."/>
            <person name="Fartmann B."/>
            <person name="Stark M."/>
            <person name="Bauer M."/>
            <person name="Zibat A."/>
            <person name="Lombardot T."/>
            <person name="Becker I."/>
            <person name="Amann J."/>
            <person name="Gellner K."/>
            <person name="Teeling H."/>
            <person name="Leuschner W.D."/>
            <person name="Gloeckner F.-O."/>
            <person name="Lupas A.N."/>
            <person name="Amann R."/>
            <person name="Klenk H.-P."/>
        </authorList>
    </citation>
    <scope>NUCLEOTIDE SEQUENCE [LARGE SCALE GENOMIC DNA]</scope>
    <source>
        <strain>DSM 12343 / LSv54</strain>
    </source>
</reference>
<accession>Q6AQH6</accession>
<dbReference type="EMBL" id="CR522870">
    <property type="protein sequence ID" value="CAG35397.1"/>
    <property type="molecule type" value="Genomic_DNA"/>
</dbReference>
<dbReference type="RefSeq" id="WP_011187913.1">
    <property type="nucleotide sequence ID" value="NC_006138.1"/>
</dbReference>
<dbReference type="SMR" id="Q6AQH6"/>
<dbReference type="STRING" id="177439.DP0668"/>
<dbReference type="KEGG" id="dps:DP0668"/>
<dbReference type="eggNOG" id="COG0851">
    <property type="taxonomic scope" value="Bacteria"/>
</dbReference>
<dbReference type="HOGENOM" id="CLU_137929_2_1_7"/>
<dbReference type="OrthoDB" id="9802655at2"/>
<dbReference type="Proteomes" id="UP000000602">
    <property type="component" value="Chromosome"/>
</dbReference>
<dbReference type="GO" id="GO:0051301">
    <property type="term" value="P:cell division"/>
    <property type="evidence" value="ECO:0007669"/>
    <property type="project" value="UniProtKB-KW"/>
</dbReference>
<dbReference type="GO" id="GO:0032955">
    <property type="term" value="P:regulation of division septum assembly"/>
    <property type="evidence" value="ECO:0007669"/>
    <property type="project" value="InterPro"/>
</dbReference>
<dbReference type="FunFam" id="3.30.1070.10:FF:000001">
    <property type="entry name" value="Cell division topological specificity factor"/>
    <property type="match status" value="1"/>
</dbReference>
<dbReference type="Gene3D" id="3.30.1070.10">
    <property type="entry name" value="Cell division topological specificity factor MinE"/>
    <property type="match status" value="1"/>
</dbReference>
<dbReference type="HAMAP" id="MF_00262">
    <property type="entry name" value="MinE"/>
    <property type="match status" value="1"/>
</dbReference>
<dbReference type="InterPro" id="IPR005527">
    <property type="entry name" value="MinE"/>
</dbReference>
<dbReference type="InterPro" id="IPR036707">
    <property type="entry name" value="MinE_sf"/>
</dbReference>
<dbReference type="NCBIfam" id="TIGR01215">
    <property type="entry name" value="minE"/>
    <property type="match status" value="1"/>
</dbReference>
<dbReference type="NCBIfam" id="NF001422">
    <property type="entry name" value="PRK00296.1"/>
    <property type="match status" value="1"/>
</dbReference>
<dbReference type="Pfam" id="PF03776">
    <property type="entry name" value="MinE"/>
    <property type="match status" value="1"/>
</dbReference>
<dbReference type="SUPFAM" id="SSF55229">
    <property type="entry name" value="Cell division protein MinE topological specificity domain"/>
    <property type="match status" value="1"/>
</dbReference>
<evidence type="ECO:0000255" key="1">
    <source>
        <dbReference type="HAMAP-Rule" id="MF_00262"/>
    </source>
</evidence>
<gene>
    <name evidence="1" type="primary">minE</name>
    <name type="ordered locus">DP0668</name>
</gene>